<reference key="1">
    <citation type="journal article" date="2005" name="Nature">
        <title>Sequencing of Aspergillus nidulans and comparative analysis with A. fumigatus and A. oryzae.</title>
        <authorList>
            <person name="Galagan J.E."/>
            <person name="Calvo S.E."/>
            <person name="Cuomo C."/>
            <person name="Ma L.-J."/>
            <person name="Wortman J.R."/>
            <person name="Batzoglou S."/>
            <person name="Lee S.-I."/>
            <person name="Bastuerkmen M."/>
            <person name="Spevak C.C."/>
            <person name="Clutterbuck J."/>
            <person name="Kapitonov V."/>
            <person name="Jurka J."/>
            <person name="Scazzocchio C."/>
            <person name="Farman M.L."/>
            <person name="Butler J."/>
            <person name="Purcell S."/>
            <person name="Harris S."/>
            <person name="Braus G.H."/>
            <person name="Draht O."/>
            <person name="Busch S."/>
            <person name="D'Enfert C."/>
            <person name="Bouchier C."/>
            <person name="Goldman G.H."/>
            <person name="Bell-Pedersen D."/>
            <person name="Griffiths-Jones S."/>
            <person name="Doonan J.H."/>
            <person name="Yu J."/>
            <person name="Vienken K."/>
            <person name="Pain A."/>
            <person name="Freitag M."/>
            <person name="Selker E.U."/>
            <person name="Archer D.B."/>
            <person name="Penalva M.A."/>
            <person name="Oakley B.R."/>
            <person name="Momany M."/>
            <person name="Tanaka T."/>
            <person name="Kumagai T."/>
            <person name="Asai K."/>
            <person name="Machida M."/>
            <person name="Nierman W.C."/>
            <person name="Denning D.W."/>
            <person name="Caddick M.X."/>
            <person name="Hynes M."/>
            <person name="Paoletti M."/>
            <person name="Fischer R."/>
            <person name="Miller B.L."/>
            <person name="Dyer P.S."/>
            <person name="Sachs M.S."/>
            <person name="Osmani S.A."/>
            <person name="Birren B.W."/>
        </authorList>
    </citation>
    <scope>NUCLEOTIDE SEQUENCE [LARGE SCALE GENOMIC DNA]</scope>
    <source>
        <strain>FGSC A4 / ATCC 38163 / CBS 112.46 / NRRL 194 / M139</strain>
    </source>
</reference>
<reference key="2">
    <citation type="journal article" date="2009" name="Fungal Genet. Biol.">
        <title>The 2008 update of the Aspergillus nidulans genome annotation: a community effort.</title>
        <authorList>
            <person name="Wortman J.R."/>
            <person name="Gilsenan J.M."/>
            <person name="Joardar V."/>
            <person name="Deegan J."/>
            <person name="Clutterbuck J."/>
            <person name="Andersen M.R."/>
            <person name="Archer D."/>
            <person name="Bencina M."/>
            <person name="Braus G."/>
            <person name="Coutinho P."/>
            <person name="von Dohren H."/>
            <person name="Doonan J."/>
            <person name="Driessen A.J."/>
            <person name="Durek P."/>
            <person name="Espeso E."/>
            <person name="Fekete E."/>
            <person name="Flipphi M."/>
            <person name="Estrada C.G."/>
            <person name="Geysens S."/>
            <person name="Goldman G."/>
            <person name="de Groot P.W."/>
            <person name="Hansen K."/>
            <person name="Harris S.D."/>
            <person name="Heinekamp T."/>
            <person name="Helmstaedt K."/>
            <person name="Henrissat B."/>
            <person name="Hofmann G."/>
            <person name="Homan T."/>
            <person name="Horio T."/>
            <person name="Horiuchi H."/>
            <person name="James S."/>
            <person name="Jones M."/>
            <person name="Karaffa L."/>
            <person name="Karanyi Z."/>
            <person name="Kato M."/>
            <person name="Keller N."/>
            <person name="Kelly D.E."/>
            <person name="Kiel J.A."/>
            <person name="Kim J.M."/>
            <person name="van der Klei I.J."/>
            <person name="Klis F.M."/>
            <person name="Kovalchuk A."/>
            <person name="Krasevec N."/>
            <person name="Kubicek C.P."/>
            <person name="Liu B."/>
            <person name="Maccabe A."/>
            <person name="Meyer V."/>
            <person name="Mirabito P."/>
            <person name="Miskei M."/>
            <person name="Mos M."/>
            <person name="Mullins J."/>
            <person name="Nelson D.R."/>
            <person name="Nielsen J."/>
            <person name="Oakley B.R."/>
            <person name="Osmani S.A."/>
            <person name="Pakula T."/>
            <person name="Paszewski A."/>
            <person name="Paulsen I."/>
            <person name="Pilsyk S."/>
            <person name="Pocsi I."/>
            <person name="Punt P.J."/>
            <person name="Ram A.F."/>
            <person name="Ren Q."/>
            <person name="Robellet X."/>
            <person name="Robson G."/>
            <person name="Seiboth B."/>
            <person name="van Solingen P."/>
            <person name="Specht T."/>
            <person name="Sun J."/>
            <person name="Taheri-Talesh N."/>
            <person name="Takeshita N."/>
            <person name="Ussery D."/>
            <person name="vanKuyk P.A."/>
            <person name="Visser H."/>
            <person name="van de Vondervoort P.J."/>
            <person name="de Vries R.P."/>
            <person name="Walton J."/>
            <person name="Xiang X."/>
            <person name="Xiong Y."/>
            <person name="Zeng A.P."/>
            <person name="Brandt B.W."/>
            <person name="Cornell M.J."/>
            <person name="van den Hondel C.A."/>
            <person name="Visser J."/>
            <person name="Oliver S.G."/>
            <person name="Turner G."/>
        </authorList>
    </citation>
    <scope>GENOME REANNOTATION</scope>
    <source>
        <strain>FGSC A4 / ATCC 38163 / CBS 112.46 / NRRL 194 / M139</strain>
    </source>
</reference>
<accession>Q5B954</accession>
<accession>C8VJ56</accession>
<keyword id="KW-0539">Nucleus</keyword>
<keyword id="KW-1185">Reference proteome</keyword>
<keyword id="KW-0687">Ribonucleoprotein</keyword>
<keyword id="KW-0690">Ribosome biogenesis</keyword>
<keyword id="KW-0698">rRNA processing</keyword>
<gene>
    <name type="primary">nsa2</name>
    <name type="ORF">AN2926</name>
</gene>
<evidence type="ECO:0000250" key="1"/>
<evidence type="ECO:0000250" key="2">
    <source>
        <dbReference type="UniProtKB" id="P40078"/>
    </source>
</evidence>
<evidence type="ECO:0000255" key="3">
    <source>
        <dbReference type="PROSITE-ProRule" id="PRU00768"/>
    </source>
</evidence>
<evidence type="ECO:0000256" key="4">
    <source>
        <dbReference type="SAM" id="MobiDB-lite"/>
    </source>
</evidence>
<evidence type="ECO:0000305" key="5"/>
<name>NSA2_EMENI</name>
<comment type="function">
    <text evidence="1">Involved in the biogenesis of the 60S ribosomal subunit. May play a part in the quality control of pre-60S particles (By similarity).</text>
</comment>
<comment type="subunit">
    <text evidence="2">Component of the pre-66S ribosomal particle. Interacts with nop7 and rrp1. Interacts with rsa4 (via WD repeats).</text>
</comment>
<comment type="subcellular location">
    <subcellularLocation>
        <location evidence="1">Nucleus</location>
        <location evidence="1">Nucleolus</location>
    </subcellularLocation>
</comment>
<comment type="similarity">
    <text evidence="5">Belongs to the eukaryotic ribosomal protein eS8 family. Ribosome biogenesis protein NSA2 subfamily.</text>
</comment>
<comment type="sequence caution" evidence="5">
    <conflict type="erroneous gene model prediction">
        <sequence resource="EMBL-CDS" id="CBF83736"/>
    </conflict>
</comment>
<comment type="sequence caution" evidence="5">
    <conflict type="erroneous gene model prediction">
        <sequence resource="EMBL-CDS" id="EAA63497"/>
    </conflict>
</comment>
<protein>
    <recommendedName>
        <fullName>Ribosome biogenesis protein nsa2</fullName>
    </recommendedName>
</protein>
<sequence length="261" mass="29762">MPQNEYIERWTKQHGKRLDHDERVRKREARQSHQQSKDAQNLRGLRAKLYQQKRHAEKIQMRKRIKAQEEKNVKSSAPSEPSKTPLPQYLLDRSEATNAKALSSAIKDKRAEKAAKFAVPLPKVKGISEEEMFKVVNTGKKTHKKSWKRMITKPTFVGNDFTRRPVKYERFIRPMGLRYKKANVTHPEMAVTVQLPILSVKKNPQNPLYTQLGVLTKGTVIEVNVSELGIVTAGGKVAWGKYAQITNTPENDGCVNAVLLV</sequence>
<proteinExistence type="inferred from homology"/>
<dbReference type="EMBL" id="AACD01000051">
    <property type="protein sequence ID" value="EAA63497.1"/>
    <property type="status" value="ALT_SEQ"/>
    <property type="molecule type" value="Genomic_DNA"/>
</dbReference>
<dbReference type="EMBL" id="BN001306">
    <property type="protein sequence ID" value="CBF83736.1"/>
    <property type="status" value="ALT_SEQ"/>
    <property type="molecule type" value="Genomic_DNA"/>
</dbReference>
<dbReference type="RefSeq" id="XP_660530.1">
    <property type="nucleotide sequence ID" value="XM_655438.1"/>
</dbReference>
<dbReference type="SMR" id="Q5B954"/>
<dbReference type="FunCoup" id="Q5B954">
    <property type="interactions" value="1148"/>
</dbReference>
<dbReference type="STRING" id="227321.Q5B954"/>
<dbReference type="KEGG" id="ani:ANIA_02926"/>
<dbReference type="VEuPathDB" id="FungiDB:AN2926"/>
<dbReference type="eggNOG" id="KOG3163">
    <property type="taxonomic scope" value="Eukaryota"/>
</dbReference>
<dbReference type="HOGENOM" id="CLU_1070048_0_0_1"/>
<dbReference type="InParanoid" id="Q5B954"/>
<dbReference type="OrthoDB" id="1847590at2759"/>
<dbReference type="Proteomes" id="UP000000560">
    <property type="component" value="Chromosome VI"/>
</dbReference>
<dbReference type="GO" id="GO:0005730">
    <property type="term" value="C:nucleolus"/>
    <property type="evidence" value="ECO:0007669"/>
    <property type="project" value="UniProtKB-SubCell"/>
</dbReference>
<dbReference type="GO" id="GO:0030687">
    <property type="term" value="C:preribosome, large subunit precursor"/>
    <property type="evidence" value="ECO:0000318"/>
    <property type="project" value="GO_Central"/>
</dbReference>
<dbReference type="GO" id="GO:0000460">
    <property type="term" value="P:maturation of 5.8S rRNA"/>
    <property type="evidence" value="ECO:0000318"/>
    <property type="project" value="GO_Central"/>
</dbReference>
<dbReference type="GO" id="GO:0000470">
    <property type="term" value="P:maturation of LSU-rRNA"/>
    <property type="evidence" value="ECO:0000318"/>
    <property type="project" value="GO_Central"/>
</dbReference>
<dbReference type="CDD" id="cd11381">
    <property type="entry name" value="NSA2"/>
    <property type="match status" value="1"/>
</dbReference>
<dbReference type="FunFam" id="2.40.10.310:FF:000001">
    <property type="entry name" value="NSA2, ribosome biogenesis homolog"/>
    <property type="match status" value="1"/>
</dbReference>
<dbReference type="Gene3D" id="2.40.10.310">
    <property type="match status" value="1"/>
</dbReference>
<dbReference type="InterPro" id="IPR039411">
    <property type="entry name" value="NSA2_fam"/>
</dbReference>
<dbReference type="InterPro" id="IPR022309">
    <property type="entry name" value="Ribosomal_Se8/biogenesis_NSA2"/>
</dbReference>
<dbReference type="PANTHER" id="PTHR12642">
    <property type="entry name" value="RIBOSOME BIOGENESIS PROTEIN NSA2 HOMOLOG"/>
    <property type="match status" value="1"/>
</dbReference>
<dbReference type="Pfam" id="PF01201">
    <property type="entry name" value="Ribosomal_S8e"/>
    <property type="match status" value="1"/>
</dbReference>
<feature type="chain" id="PRO_0000320417" description="Ribosome biogenesis protein nsa2">
    <location>
        <begin position="1"/>
        <end position="261"/>
    </location>
</feature>
<feature type="region of interest" description="Disordered" evidence="4">
    <location>
        <begin position="1"/>
        <end position="87"/>
    </location>
</feature>
<feature type="short sequence motif" description="Nuclear localization signal 1" evidence="3">
    <location>
        <begin position="15"/>
        <end position="22"/>
    </location>
</feature>
<feature type="short sequence motif" description="Nuclear localization signal 2" evidence="3">
    <location>
        <begin position="52"/>
        <end position="59"/>
    </location>
</feature>
<feature type="compositionally biased region" description="Basic and acidic residues" evidence="4">
    <location>
        <begin position="1"/>
        <end position="31"/>
    </location>
</feature>
<feature type="compositionally biased region" description="Basic residues" evidence="4">
    <location>
        <begin position="51"/>
        <end position="65"/>
    </location>
</feature>
<organism>
    <name type="scientific">Emericella nidulans (strain FGSC A4 / ATCC 38163 / CBS 112.46 / NRRL 194 / M139)</name>
    <name type="common">Aspergillus nidulans</name>
    <dbReference type="NCBI Taxonomy" id="227321"/>
    <lineage>
        <taxon>Eukaryota</taxon>
        <taxon>Fungi</taxon>
        <taxon>Dikarya</taxon>
        <taxon>Ascomycota</taxon>
        <taxon>Pezizomycotina</taxon>
        <taxon>Eurotiomycetes</taxon>
        <taxon>Eurotiomycetidae</taxon>
        <taxon>Eurotiales</taxon>
        <taxon>Aspergillaceae</taxon>
        <taxon>Aspergillus</taxon>
        <taxon>Aspergillus subgen. Nidulantes</taxon>
    </lineage>
</organism>